<comment type="induction">
    <text>Upon contact with the plant pathogens fungus Fusarium solani, Pseudomonas syringae pv pisi, and the fungal elicitor chitosan.</text>
</comment>
<comment type="similarity">
    <text evidence="1">Belongs to the BetVI family.</text>
</comment>
<dbReference type="EMBL" id="M18249">
    <property type="protein sequence ID" value="AAA33661.1"/>
    <property type="molecule type" value="mRNA"/>
</dbReference>
<dbReference type="PIR" id="T06768">
    <property type="entry name" value="T06768"/>
</dbReference>
<dbReference type="SMR" id="P13239"/>
<dbReference type="GO" id="GO:0005737">
    <property type="term" value="C:cytoplasm"/>
    <property type="evidence" value="ECO:0007669"/>
    <property type="project" value="TreeGrafter"/>
</dbReference>
<dbReference type="GO" id="GO:0005634">
    <property type="term" value="C:nucleus"/>
    <property type="evidence" value="ECO:0007669"/>
    <property type="project" value="TreeGrafter"/>
</dbReference>
<dbReference type="GO" id="GO:0010427">
    <property type="term" value="F:abscisic acid binding"/>
    <property type="evidence" value="ECO:0007669"/>
    <property type="project" value="InterPro"/>
</dbReference>
<dbReference type="GO" id="GO:0004864">
    <property type="term" value="F:protein phosphatase inhibitor activity"/>
    <property type="evidence" value="ECO:0007669"/>
    <property type="project" value="InterPro"/>
</dbReference>
<dbReference type="GO" id="GO:0038023">
    <property type="term" value="F:signaling receptor activity"/>
    <property type="evidence" value="ECO:0007669"/>
    <property type="project" value="InterPro"/>
</dbReference>
<dbReference type="GO" id="GO:0009738">
    <property type="term" value="P:abscisic acid-activated signaling pathway"/>
    <property type="evidence" value="ECO:0007669"/>
    <property type="project" value="InterPro"/>
</dbReference>
<dbReference type="GO" id="GO:0006952">
    <property type="term" value="P:defense response"/>
    <property type="evidence" value="ECO:0007669"/>
    <property type="project" value="UniProtKB-KW"/>
</dbReference>
<dbReference type="CDD" id="cd07816">
    <property type="entry name" value="Bet_v1-like"/>
    <property type="match status" value="1"/>
</dbReference>
<dbReference type="FunFam" id="3.30.530.20:FF:000007">
    <property type="entry name" value="Major pollen allergen Bet v 1-A"/>
    <property type="match status" value="1"/>
</dbReference>
<dbReference type="Gene3D" id="3.30.530.20">
    <property type="match status" value="1"/>
</dbReference>
<dbReference type="InterPro" id="IPR000916">
    <property type="entry name" value="Bet_v_I/MLP"/>
</dbReference>
<dbReference type="InterPro" id="IPR024949">
    <property type="entry name" value="Bet_v_I_allergen"/>
</dbReference>
<dbReference type="InterPro" id="IPR050279">
    <property type="entry name" value="Plant_def-hormone_signal"/>
</dbReference>
<dbReference type="InterPro" id="IPR023393">
    <property type="entry name" value="START-like_dom_sf"/>
</dbReference>
<dbReference type="PANTHER" id="PTHR31213">
    <property type="entry name" value="OS08G0374000 PROTEIN-RELATED"/>
    <property type="match status" value="1"/>
</dbReference>
<dbReference type="PANTHER" id="PTHR31213:SF55">
    <property type="entry name" value="STRESS-INDUCED PROTEIN SAM22"/>
    <property type="match status" value="1"/>
</dbReference>
<dbReference type="Pfam" id="PF00407">
    <property type="entry name" value="Bet_v_1"/>
    <property type="match status" value="1"/>
</dbReference>
<dbReference type="PRINTS" id="PR00634">
    <property type="entry name" value="BETALLERGEN"/>
</dbReference>
<dbReference type="SUPFAM" id="SSF55961">
    <property type="entry name" value="Bet v1-like"/>
    <property type="match status" value="1"/>
</dbReference>
<dbReference type="PROSITE" id="PS00451">
    <property type="entry name" value="PATHOGENESIS_BETVI"/>
    <property type="match status" value="1"/>
</dbReference>
<keyword id="KW-0568">Pathogenesis-related protein</keyword>
<keyword id="KW-0611">Plant defense</keyword>
<protein>
    <recommendedName>
        <fullName>Disease resistance response protein Pi176</fullName>
    </recommendedName>
</protein>
<accession>P13239</accession>
<evidence type="ECO:0000305" key="1"/>
<organism>
    <name type="scientific">Pisum sativum</name>
    <name type="common">Garden pea</name>
    <name type="synonym">Lathyrus oleraceus</name>
    <dbReference type="NCBI Taxonomy" id="3888"/>
    <lineage>
        <taxon>Eukaryota</taxon>
        <taxon>Viridiplantae</taxon>
        <taxon>Streptophyta</taxon>
        <taxon>Embryophyta</taxon>
        <taxon>Tracheophyta</taxon>
        <taxon>Spermatophyta</taxon>
        <taxon>Magnoliopsida</taxon>
        <taxon>eudicotyledons</taxon>
        <taxon>Gunneridae</taxon>
        <taxon>Pentapetalae</taxon>
        <taxon>rosids</taxon>
        <taxon>fabids</taxon>
        <taxon>Fabales</taxon>
        <taxon>Fabaceae</taxon>
        <taxon>Papilionoideae</taxon>
        <taxon>50 kb inversion clade</taxon>
        <taxon>NPAAA clade</taxon>
        <taxon>Hologalegina</taxon>
        <taxon>IRL clade</taxon>
        <taxon>Fabeae</taxon>
        <taxon>Pisum</taxon>
    </lineage>
</organism>
<reference key="1">
    <citation type="journal article" date="1988" name="Plant Mol. Biol.">
        <title>cDNA sequences for pea disease resistance response genes.</title>
        <authorList>
            <person name="Fristensky B.W."/>
            <person name="Horovitz D."/>
            <person name="Hadwiger L.A."/>
        </authorList>
        <dbReference type="AGRICOLA" id="IND92000015"/>
    </citation>
    <scope>NUCLEOTIDE SEQUENCE [MRNA]</scope>
    <source>
        <strain>cv. Alaska</strain>
    </source>
</reference>
<proteinExistence type="evidence at transcript level"/>
<name>DRR1_PEA</name>
<feature type="chain" id="PRO_0000154165" description="Disease resistance response protein Pi176">
    <location>
        <begin position="1"/>
        <end position="159"/>
    </location>
</feature>
<sequence length="159" mass="16920">MGVFNVEDEITSVVAPAILYKALVTDADTLTPKVIDAIKSIEIVEGNGGAGTIKKLTFVEDGETKHVLHKVELVDVANLAYNYSIVGGVGFPDTVEKISFEAKLSAGPNGGSIAKLSVKYYTKGDAAAPTEEQLKSDKAKGDGLFKALERYCLAHPDYN</sequence>